<gene>
    <name evidence="1" type="primary">rpsS</name>
    <name type="ordered locus">XF_1156</name>
</gene>
<reference key="1">
    <citation type="journal article" date="2000" name="Nature">
        <title>The genome sequence of the plant pathogen Xylella fastidiosa.</title>
        <authorList>
            <person name="Simpson A.J.G."/>
            <person name="Reinach F.C."/>
            <person name="Arruda P."/>
            <person name="Abreu F.A."/>
            <person name="Acencio M."/>
            <person name="Alvarenga R."/>
            <person name="Alves L.M.C."/>
            <person name="Araya J.E."/>
            <person name="Baia G.S."/>
            <person name="Baptista C.S."/>
            <person name="Barros M.H."/>
            <person name="Bonaccorsi E.D."/>
            <person name="Bordin S."/>
            <person name="Bove J.M."/>
            <person name="Briones M.R.S."/>
            <person name="Bueno M.R.P."/>
            <person name="Camargo A.A."/>
            <person name="Camargo L.E.A."/>
            <person name="Carraro D.M."/>
            <person name="Carrer H."/>
            <person name="Colauto N.B."/>
            <person name="Colombo C."/>
            <person name="Costa F.F."/>
            <person name="Costa M.C.R."/>
            <person name="Costa-Neto C.M."/>
            <person name="Coutinho L.L."/>
            <person name="Cristofani M."/>
            <person name="Dias-Neto E."/>
            <person name="Docena C."/>
            <person name="El-Dorry H."/>
            <person name="Facincani A.P."/>
            <person name="Ferreira A.J.S."/>
            <person name="Ferreira V.C.A."/>
            <person name="Ferro J.A."/>
            <person name="Fraga J.S."/>
            <person name="Franca S.C."/>
            <person name="Franco M.C."/>
            <person name="Frohme M."/>
            <person name="Furlan L.R."/>
            <person name="Garnier M."/>
            <person name="Goldman G.H."/>
            <person name="Goldman M.H.S."/>
            <person name="Gomes S.L."/>
            <person name="Gruber A."/>
            <person name="Ho P.L."/>
            <person name="Hoheisel J.D."/>
            <person name="Junqueira M.L."/>
            <person name="Kemper E.L."/>
            <person name="Kitajima J.P."/>
            <person name="Krieger J.E."/>
            <person name="Kuramae E.E."/>
            <person name="Laigret F."/>
            <person name="Lambais M.R."/>
            <person name="Leite L.C.C."/>
            <person name="Lemos E.G.M."/>
            <person name="Lemos M.V.F."/>
            <person name="Lopes S.A."/>
            <person name="Lopes C.R."/>
            <person name="Machado J.A."/>
            <person name="Machado M.A."/>
            <person name="Madeira A.M.B.N."/>
            <person name="Madeira H.M.F."/>
            <person name="Marino C.L."/>
            <person name="Marques M.V."/>
            <person name="Martins E.A.L."/>
            <person name="Martins E.M.F."/>
            <person name="Matsukuma A.Y."/>
            <person name="Menck C.F.M."/>
            <person name="Miracca E.C."/>
            <person name="Miyaki C.Y."/>
            <person name="Monteiro-Vitorello C.B."/>
            <person name="Moon D.H."/>
            <person name="Nagai M.A."/>
            <person name="Nascimento A.L.T.O."/>
            <person name="Netto L.E.S."/>
            <person name="Nhani A. Jr."/>
            <person name="Nobrega F.G."/>
            <person name="Nunes L.R."/>
            <person name="Oliveira M.A."/>
            <person name="de Oliveira M.C."/>
            <person name="de Oliveira R.C."/>
            <person name="Palmieri D.A."/>
            <person name="Paris A."/>
            <person name="Peixoto B.R."/>
            <person name="Pereira G.A.G."/>
            <person name="Pereira H.A. Jr."/>
            <person name="Pesquero J.B."/>
            <person name="Quaggio R.B."/>
            <person name="Roberto P.G."/>
            <person name="Rodrigues V."/>
            <person name="de Rosa A.J.M."/>
            <person name="de Rosa V.E. Jr."/>
            <person name="de Sa R.G."/>
            <person name="Santelli R.V."/>
            <person name="Sawasaki H.E."/>
            <person name="da Silva A.C.R."/>
            <person name="da Silva A.M."/>
            <person name="da Silva F.R."/>
            <person name="Silva W.A. Jr."/>
            <person name="da Silveira J.F."/>
            <person name="Silvestri M.L.Z."/>
            <person name="Siqueira W.J."/>
            <person name="de Souza A.A."/>
            <person name="de Souza A.P."/>
            <person name="Terenzi M.F."/>
            <person name="Truffi D."/>
            <person name="Tsai S.M."/>
            <person name="Tsuhako M.H."/>
            <person name="Vallada H."/>
            <person name="Van Sluys M.A."/>
            <person name="Verjovski-Almeida S."/>
            <person name="Vettore A.L."/>
            <person name="Zago M.A."/>
            <person name="Zatz M."/>
            <person name="Meidanis J."/>
            <person name="Setubal J.C."/>
        </authorList>
    </citation>
    <scope>NUCLEOTIDE SEQUENCE [LARGE SCALE GENOMIC DNA]</scope>
    <source>
        <strain>9a5c</strain>
    </source>
</reference>
<feature type="chain" id="PRO_0000129944" description="Small ribosomal subunit protein uS19">
    <location>
        <begin position="1"/>
        <end position="89"/>
    </location>
</feature>
<keyword id="KW-0687">Ribonucleoprotein</keyword>
<keyword id="KW-0689">Ribosomal protein</keyword>
<keyword id="KW-0694">RNA-binding</keyword>
<keyword id="KW-0699">rRNA-binding</keyword>
<protein>
    <recommendedName>
        <fullName evidence="1">Small ribosomal subunit protein uS19</fullName>
    </recommendedName>
    <alternativeName>
        <fullName evidence="2">30S ribosomal protein S19</fullName>
    </alternativeName>
</protein>
<comment type="function">
    <text evidence="1">Protein S19 forms a complex with S13 that binds strongly to the 16S ribosomal RNA.</text>
</comment>
<comment type="similarity">
    <text evidence="1">Belongs to the universal ribosomal protein uS19 family.</text>
</comment>
<name>RS19_XYLFA</name>
<sequence>MPRSTKKGPFFDHHLIKKVESAAGSKRPIKTCSRRSVILPQMVGHTIAIHNGKNYYPVVINENMVGHKLGEFSITRVFKGHGGDKKSGK</sequence>
<proteinExistence type="inferred from homology"/>
<dbReference type="EMBL" id="AE003849">
    <property type="protein sequence ID" value="AAF83966.1"/>
    <property type="molecule type" value="Genomic_DNA"/>
</dbReference>
<dbReference type="PIR" id="D82717">
    <property type="entry name" value="D82717"/>
</dbReference>
<dbReference type="RefSeq" id="WP_010893672.1">
    <property type="nucleotide sequence ID" value="NC_002488.3"/>
</dbReference>
<dbReference type="SMR" id="Q9PE72"/>
<dbReference type="STRING" id="160492.XF_1156"/>
<dbReference type="KEGG" id="xfa:XF_1156"/>
<dbReference type="eggNOG" id="COG0185">
    <property type="taxonomic scope" value="Bacteria"/>
</dbReference>
<dbReference type="HOGENOM" id="CLU_144911_0_1_6"/>
<dbReference type="Proteomes" id="UP000000812">
    <property type="component" value="Chromosome"/>
</dbReference>
<dbReference type="GO" id="GO:0005737">
    <property type="term" value="C:cytoplasm"/>
    <property type="evidence" value="ECO:0007669"/>
    <property type="project" value="UniProtKB-ARBA"/>
</dbReference>
<dbReference type="GO" id="GO:0015935">
    <property type="term" value="C:small ribosomal subunit"/>
    <property type="evidence" value="ECO:0007669"/>
    <property type="project" value="InterPro"/>
</dbReference>
<dbReference type="GO" id="GO:0019843">
    <property type="term" value="F:rRNA binding"/>
    <property type="evidence" value="ECO:0007669"/>
    <property type="project" value="UniProtKB-UniRule"/>
</dbReference>
<dbReference type="GO" id="GO:0003735">
    <property type="term" value="F:structural constituent of ribosome"/>
    <property type="evidence" value="ECO:0007669"/>
    <property type="project" value="InterPro"/>
</dbReference>
<dbReference type="GO" id="GO:0000028">
    <property type="term" value="P:ribosomal small subunit assembly"/>
    <property type="evidence" value="ECO:0007669"/>
    <property type="project" value="TreeGrafter"/>
</dbReference>
<dbReference type="GO" id="GO:0006412">
    <property type="term" value="P:translation"/>
    <property type="evidence" value="ECO:0007669"/>
    <property type="project" value="UniProtKB-UniRule"/>
</dbReference>
<dbReference type="FunFam" id="3.30.860.10:FF:000001">
    <property type="entry name" value="30S ribosomal protein S19"/>
    <property type="match status" value="1"/>
</dbReference>
<dbReference type="Gene3D" id="3.30.860.10">
    <property type="entry name" value="30s Ribosomal Protein S19, Chain A"/>
    <property type="match status" value="1"/>
</dbReference>
<dbReference type="HAMAP" id="MF_00531">
    <property type="entry name" value="Ribosomal_uS19"/>
    <property type="match status" value="1"/>
</dbReference>
<dbReference type="InterPro" id="IPR002222">
    <property type="entry name" value="Ribosomal_uS19"/>
</dbReference>
<dbReference type="InterPro" id="IPR005732">
    <property type="entry name" value="Ribosomal_uS19_bac-type"/>
</dbReference>
<dbReference type="InterPro" id="IPR020934">
    <property type="entry name" value="Ribosomal_uS19_CS"/>
</dbReference>
<dbReference type="InterPro" id="IPR023575">
    <property type="entry name" value="Ribosomal_uS19_SF"/>
</dbReference>
<dbReference type="NCBIfam" id="TIGR01050">
    <property type="entry name" value="rpsS_bact"/>
    <property type="match status" value="1"/>
</dbReference>
<dbReference type="PANTHER" id="PTHR11880">
    <property type="entry name" value="RIBOSOMAL PROTEIN S19P FAMILY MEMBER"/>
    <property type="match status" value="1"/>
</dbReference>
<dbReference type="PANTHER" id="PTHR11880:SF8">
    <property type="entry name" value="SMALL RIBOSOMAL SUBUNIT PROTEIN US19M"/>
    <property type="match status" value="1"/>
</dbReference>
<dbReference type="Pfam" id="PF00203">
    <property type="entry name" value="Ribosomal_S19"/>
    <property type="match status" value="1"/>
</dbReference>
<dbReference type="PIRSF" id="PIRSF002144">
    <property type="entry name" value="Ribosomal_S19"/>
    <property type="match status" value="1"/>
</dbReference>
<dbReference type="PRINTS" id="PR00975">
    <property type="entry name" value="RIBOSOMALS19"/>
</dbReference>
<dbReference type="SUPFAM" id="SSF54570">
    <property type="entry name" value="Ribosomal protein S19"/>
    <property type="match status" value="1"/>
</dbReference>
<dbReference type="PROSITE" id="PS00323">
    <property type="entry name" value="RIBOSOMAL_S19"/>
    <property type="match status" value="1"/>
</dbReference>
<accession>Q9PE72</accession>
<evidence type="ECO:0000255" key="1">
    <source>
        <dbReference type="HAMAP-Rule" id="MF_00531"/>
    </source>
</evidence>
<evidence type="ECO:0000305" key="2"/>
<organism>
    <name type="scientific">Xylella fastidiosa (strain 9a5c)</name>
    <dbReference type="NCBI Taxonomy" id="160492"/>
    <lineage>
        <taxon>Bacteria</taxon>
        <taxon>Pseudomonadati</taxon>
        <taxon>Pseudomonadota</taxon>
        <taxon>Gammaproteobacteria</taxon>
        <taxon>Lysobacterales</taxon>
        <taxon>Lysobacteraceae</taxon>
        <taxon>Xylella</taxon>
    </lineage>
</organism>